<comment type="catalytic activity">
    <reaction evidence="1">
        <text>uridine + ATP = UMP + ADP + H(+)</text>
        <dbReference type="Rhea" id="RHEA:16825"/>
        <dbReference type="ChEBI" id="CHEBI:15378"/>
        <dbReference type="ChEBI" id="CHEBI:16704"/>
        <dbReference type="ChEBI" id="CHEBI:30616"/>
        <dbReference type="ChEBI" id="CHEBI:57865"/>
        <dbReference type="ChEBI" id="CHEBI:456216"/>
        <dbReference type="EC" id="2.7.1.48"/>
    </reaction>
</comment>
<comment type="catalytic activity">
    <reaction evidence="1">
        <text>cytidine + ATP = CMP + ADP + H(+)</text>
        <dbReference type="Rhea" id="RHEA:24674"/>
        <dbReference type="ChEBI" id="CHEBI:15378"/>
        <dbReference type="ChEBI" id="CHEBI:17562"/>
        <dbReference type="ChEBI" id="CHEBI:30616"/>
        <dbReference type="ChEBI" id="CHEBI:60377"/>
        <dbReference type="ChEBI" id="CHEBI:456216"/>
        <dbReference type="EC" id="2.7.1.48"/>
    </reaction>
</comment>
<comment type="pathway">
    <text evidence="1">Pyrimidine metabolism; CTP biosynthesis via salvage pathway; CTP from cytidine: step 1/3.</text>
</comment>
<comment type="pathway">
    <text evidence="1">Pyrimidine metabolism; UMP biosynthesis via salvage pathway; UMP from uridine: step 1/1.</text>
</comment>
<comment type="subcellular location">
    <subcellularLocation>
        <location evidence="1">Cytoplasm</location>
    </subcellularLocation>
</comment>
<comment type="similarity">
    <text evidence="1">Belongs to the uridine kinase family.</text>
</comment>
<protein>
    <recommendedName>
        <fullName evidence="1">Uridine kinase</fullName>
        <ecNumber evidence="1">2.7.1.48</ecNumber>
    </recommendedName>
    <alternativeName>
        <fullName evidence="1">Cytidine monophosphokinase</fullName>
    </alternativeName>
    <alternativeName>
        <fullName evidence="1">Uridine monophosphokinase</fullName>
    </alternativeName>
</protein>
<feature type="chain" id="PRO_0000164502" description="Uridine kinase">
    <location>
        <begin position="1"/>
        <end position="208"/>
    </location>
</feature>
<feature type="binding site" evidence="1">
    <location>
        <begin position="12"/>
        <end position="19"/>
    </location>
    <ligand>
        <name>ATP</name>
        <dbReference type="ChEBI" id="CHEBI:30616"/>
    </ligand>
</feature>
<sequence>MLKKPIIIGVTGGSGGGKTSVSRAILDSFPNARIAMIQHDSYYKDQSHMSFEERVKTNYDHPLAFDTDFMIQQLKELLAGRPVDIPIYDYKKHTRSNTTFRQDPQDVIIVEGILVLEDERLRDLMDIKLFVDTDDDIRIIRRIKRDMMERGRSLESIIDQYTSVVKPMYHQFIEPSKRYADIVIPEGVSNVVAIDVINSKIASILGEV</sequence>
<organism>
    <name type="scientific">Streptococcus pyogenes serotype M3 (strain ATCC BAA-595 / MGAS315)</name>
    <dbReference type="NCBI Taxonomy" id="198466"/>
    <lineage>
        <taxon>Bacteria</taxon>
        <taxon>Bacillati</taxon>
        <taxon>Bacillota</taxon>
        <taxon>Bacilli</taxon>
        <taxon>Lactobacillales</taxon>
        <taxon>Streptococcaceae</taxon>
        <taxon>Streptococcus</taxon>
    </lineage>
</organism>
<keyword id="KW-0067">ATP-binding</keyword>
<keyword id="KW-0963">Cytoplasm</keyword>
<keyword id="KW-0418">Kinase</keyword>
<keyword id="KW-0547">Nucleotide-binding</keyword>
<keyword id="KW-0808">Transferase</keyword>
<evidence type="ECO:0000255" key="1">
    <source>
        <dbReference type="HAMAP-Rule" id="MF_00551"/>
    </source>
</evidence>
<reference key="1">
    <citation type="journal article" date="2002" name="Proc. Natl. Acad. Sci. U.S.A.">
        <title>Genome sequence of a serotype M3 strain of group A Streptococcus: phage-encoded toxins, the high-virulence phenotype, and clone emergence.</title>
        <authorList>
            <person name="Beres S.B."/>
            <person name="Sylva G.L."/>
            <person name="Barbian K.D."/>
            <person name="Lei B."/>
            <person name="Hoff J.S."/>
            <person name="Mammarella N.D."/>
            <person name="Liu M.-Y."/>
            <person name="Smoot J.C."/>
            <person name="Porcella S.F."/>
            <person name="Parkins L.D."/>
            <person name="Campbell D.S."/>
            <person name="Smith T.M."/>
            <person name="McCormick J.K."/>
            <person name="Leung D.Y.M."/>
            <person name="Schlievert P.M."/>
            <person name="Musser J.M."/>
        </authorList>
    </citation>
    <scope>NUCLEOTIDE SEQUENCE [LARGE SCALE GENOMIC DNA]</scope>
    <source>
        <strain>ATCC BAA-595 / MGAS315</strain>
    </source>
</reference>
<name>URK_STRP3</name>
<proteinExistence type="inferred from homology"/>
<accession>P0DH36</accession>
<accession>P67416</accession>
<accession>Q99Z70</accession>
<gene>
    <name evidence="1" type="primary">udk</name>
    <name type="ordered locus">SpyM3_1042</name>
</gene>
<dbReference type="EC" id="2.7.1.48" evidence="1"/>
<dbReference type="EMBL" id="AE014074">
    <property type="protein sequence ID" value="AAM79649.1"/>
    <property type="molecule type" value="Genomic_DNA"/>
</dbReference>
<dbReference type="RefSeq" id="WP_002984060.1">
    <property type="nucleotide sequence ID" value="NC_004070.1"/>
</dbReference>
<dbReference type="SMR" id="P0DH36"/>
<dbReference type="GeneID" id="69900663"/>
<dbReference type="KEGG" id="spg:SpyM3_1042"/>
<dbReference type="HOGENOM" id="CLU_021278_1_2_9"/>
<dbReference type="UniPathway" id="UPA00574">
    <property type="reaction ID" value="UER00637"/>
</dbReference>
<dbReference type="UniPathway" id="UPA00579">
    <property type="reaction ID" value="UER00640"/>
</dbReference>
<dbReference type="Proteomes" id="UP000000564">
    <property type="component" value="Chromosome"/>
</dbReference>
<dbReference type="GO" id="GO:0005737">
    <property type="term" value="C:cytoplasm"/>
    <property type="evidence" value="ECO:0007669"/>
    <property type="project" value="UniProtKB-SubCell"/>
</dbReference>
<dbReference type="GO" id="GO:0005524">
    <property type="term" value="F:ATP binding"/>
    <property type="evidence" value="ECO:0007669"/>
    <property type="project" value="UniProtKB-UniRule"/>
</dbReference>
<dbReference type="GO" id="GO:0043771">
    <property type="term" value="F:cytidine kinase activity"/>
    <property type="evidence" value="ECO:0007669"/>
    <property type="project" value="RHEA"/>
</dbReference>
<dbReference type="GO" id="GO:0004849">
    <property type="term" value="F:uridine kinase activity"/>
    <property type="evidence" value="ECO:0007669"/>
    <property type="project" value="UniProtKB-UniRule"/>
</dbReference>
<dbReference type="GO" id="GO:0044211">
    <property type="term" value="P:CTP salvage"/>
    <property type="evidence" value="ECO:0007669"/>
    <property type="project" value="UniProtKB-UniRule"/>
</dbReference>
<dbReference type="GO" id="GO:0044206">
    <property type="term" value="P:UMP salvage"/>
    <property type="evidence" value="ECO:0007669"/>
    <property type="project" value="UniProtKB-UniRule"/>
</dbReference>
<dbReference type="CDD" id="cd02023">
    <property type="entry name" value="UMPK"/>
    <property type="match status" value="1"/>
</dbReference>
<dbReference type="Gene3D" id="3.40.50.300">
    <property type="entry name" value="P-loop containing nucleotide triphosphate hydrolases"/>
    <property type="match status" value="1"/>
</dbReference>
<dbReference type="HAMAP" id="MF_00551">
    <property type="entry name" value="Uridine_kinase"/>
    <property type="match status" value="1"/>
</dbReference>
<dbReference type="InterPro" id="IPR027417">
    <property type="entry name" value="P-loop_NTPase"/>
</dbReference>
<dbReference type="InterPro" id="IPR006083">
    <property type="entry name" value="PRK/URK"/>
</dbReference>
<dbReference type="InterPro" id="IPR026008">
    <property type="entry name" value="Uridine_kinase"/>
</dbReference>
<dbReference type="InterPro" id="IPR000764">
    <property type="entry name" value="Uridine_kinase-like"/>
</dbReference>
<dbReference type="NCBIfam" id="NF004018">
    <property type="entry name" value="PRK05480.1"/>
    <property type="match status" value="1"/>
</dbReference>
<dbReference type="NCBIfam" id="TIGR00235">
    <property type="entry name" value="udk"/>
    <property type="match status" value="1"/>
</dbReference>
<dbReference type="PANTHER" id="PTHR10285">
    <property type="entry name" value="URIDINE KINASE"/>
    <property type="match status" value="1"/>
</dbReference>
<dbReference type="Pfam" id="PF00485">
    <property type="entry name" value="PRK"/>
    <property type="match status" value="1"/>
</dbReference>
<dbReference type="PRINTS" id="PR00988">
    <property type="entry name" value="URIDINKINASE"/>
</dbReference>
<dbReference type="SUPFAM" id="SSF52540">
    <property type="entry name" value="P-loop containing nucleoside triphosphate hydrolases"/>
    <property type="match status" value="1"/>
</dbReference>